<evidence type="ECO:0000250" key="1">
    <source>
        <dbReference type="UniProtKB" id="P00423"/>
    </source>
</evidence>
<evidence type="ECO:0000250" key="2">
    <source>
        <dbReference type="UniProtKB" id="P00424"/>
    </source>
</evidence>
<evidence type="ECO:0000250" key="3">
    <source>
        <dbReference type="UniProtKB" id="P10888"/>
    </source>
</evidence>
<evidence type="ECO:0000250" key="4">
    <source>
        <dbReference type="UniProtKB" id="P13073"/>
    </source>
</evidence>
<evidence type="ECO:0000250" key="5">
    <source>
        <dbReference type="UniProtKB" id="P19783"/>
    </source>
</evidence>
<evidence type="ECO:0000305" key="6"/>
<organism>
    <name type="scientific">Pan troglodytes</name>
    <name type="common">Chimpanzee</name>
    <dbReference type="NCBI Taxonomy" id="9598"/>
    <lineage>
        <taxon>Eukaryota</taxon>
        <taxon>Metazoa</taxon>
        <taxon>Chordata</taxon>
        <taxon>Craniata</taxon>
        <taxon>Vertebrata</taxon>
        <taxon>Euteleostomi</taxon>
        <taxon>Mammalia</taxon>
        <taxon>Eutheria</taxon>
        <taxon>Euarchontoglires</taxon>
        <taxon>Primates</taxon>
        <taxon>Haplorrhini</taxon>
        <taxon>Catarrhini</taxon>
        <taxon>Hominidae</taxon>
        <taxon>Pan</taxon>
    </lineage>
</organism>
<proteinExistence type="inferred from homology"/>
<comment type="function">
    <text evidence="2">Component of the cytochrome c oxidase, the last enzyme in the mitochondrial electron transport chain which drives oxidative phosphorylation. The respiratory chain contains 3 multisubunit complexes succinate dehydrogenase (complex II, CII), ubiquinol-cytochrome c oxidoreductase (cytochrome b-c1 complex, complex III, CIII) and cytochrome c oxidase (complex IV, CIV), that cooperate to transfer electrons derived from NADH and succinate to molecular oxygen, creating an electrochemical gradient over the inner membrane that drives transmembrane transport and the ATP synthase. Cytochrome c oxidase is the component of the respiratory chain that catalyzes the reduction of oxygen to water. Electrons originating from reduced cytochrome c in the intermembrane space (IMS) are transferred via the dinuclear copper A center (CU(A)) of subunit 2 and heme A of subunit 1 to the active site in subunit 1, a binuclear center (BNC) formed by heme A3 and copper B (CU(B)). The BNC reduces molecular oxygen to 2 water molecules using 4 electrons from cytochrome c in the IMS and 4 protons from the mitochondrial matrix.</text>
</comment>
<comment type="pathway">
    <text evidence="2">Energy metabolism; oxidative phosphorylation.</text>
</comment>
<comment type="subunit">
    <text evidence="1 3 4 5">Component of the cytochrome c oxidase (complex IV, CIV), a multisubunit enzyme composed of 14 subunits. The complex is composed of a catalytic core of 3 subunits MT-CO1, MT-CO2 and MT-CO3, encoded in the mitochondrial DNA, and 11 supernumerary subunits COX4I, COX5A, COX5B, COX6A, COX6B, COX6C, COX7A, COX7B, COX7C, COX8 and NDUFA4, which are encoded in the nuclear genome. The complex exists as a monomer or a dimer and forms supercomplexes (SCs) in the inner mitochondrial membrane with NADH-ubiquinone oxidoreductase (complex I, CI) and ubiquinol-cytochrome c oxidoreductase (cytochrome b-c1 complex, complex III, CIII), resulting in different assemblies (supercomplex SCI(1)III(2)IV(1) and megacomplex MCI(2)III(2)IV(2)) (By similarity). Interacts with PHB2; the interaction decreases in absence of SPHK2 (By similarity). Interacts with AFG1L (By similarity). Interacts with ABCB7; this interaction allows the regulation of cellular iron homeostasis and cellular reactive oxygen species (ROS) levels in cardiomyocytes (By similarity). Interacts with FLVCR2; this interaction occurs in the absence of heme and is disrupted upon heme binding. Interacts with IRGC (By similarity).</text>
</comment>
<comment type="subcellular location">
    <subcellularLocation>
        <location evidence="1">Mitochondrion inner membrane</location>
        <topology evidence="1">Single-pass membrane protein</topology>
    </subcellularLocation>
</comment>
<comment type="similarity">
    <text evidence="6">Belongs to the cytochrome c oxidase IV family.</text>
</comment>
<gene>
    <name type="primary">COX4I1</name>
    <name type="synonym">COX4</name>
</gene>
<sequence length="144" mass="16862">SVVKSEDFSLPAYMDRRDHPLPEVAHVKHLSASQKALKEKEKASWSSLSMDEKVELYRIKFKESFAEMNRGSNEWKTVVGGAMFFIGFTALVIMWQKHYVYGPLPQSFDKEWVAKQTKRMLDMKVNPIQGLASKWDYEKNEWKK</sequence>
<accession>O46577</accession>
<name>COX41_PANTR</name>
<feature type="chain" id="PRO_0000194077" description="Cytochrome c oxidase subunit 4 isoform 1, mitochondrial">
    <location>
        <begin position="1" status="less than"/>
        <end position="144"/>
    </location>
</feature>
<feature type="topological domain" description="Mitochondrial matrix" evidence="1">
    <location>
        <begin position="1" status="less than"/>
        <end position="73"/>
    </location>
</feature>
<feature type="transmembrane region" description="Helical" evidence="1">
    <location>
        <begin position="74"/>
        <end position="99"/>
    </location>
</feature>
<feature type="topological domain" description="Mitochondrial intermembrane" evidence="1">
    <location>
        <begin position="100"/>
        <end position="144"/>
    </location>
</feature>
<feature type="modified residue" description="N6-acetyllysine; alternate" evidence="5">
    <location>
        <position position="4"/>
    </location>
</feature>
<feature type="modified residue" description="N6-succinyllysine; alternate" evidence="5">
    <location>
        <position position="4"/>
    </location>
</feature>
<feature type="modified residue" description="N6-acetyllysine" evidence="4">
    <location>
        <position position="28"/>
    </location>
</feature>
<feature type="modified residue" description="Phosphoserine" evidence="3">
    <location>
        <position position="31"/>
    </location>
</feature>
<feature type="modified residue" description="Phosphoserine" evidence="3">
    <location>
        <position position="33"/>
    </location>
</feature>
<feature type="modified residue" description="N6-acetyllysine; alternate" evidence="4">
    <location>
        <position position="35"/>
    </location>
</feature>
<feature type="modified residue" description="N6-succinyllysine; alternate" evidence="5">
    <location>
        <position position="35"/>
    </location>
</feature>
<feature type="modified residue" description="N6-acetyllysine" evidence="5">
    <location>
        <position position="42"/>
    </location>
</feature>
<feature type="non-terminal residue">
    <location>
        <position position="1"/>
    </location>
</feature>
<keyword id="KW-0007">Acetylation</keyword>
<keyword id="KW-0472">Membrane</keyword>
<keyword id="KW-0496">Mitochondrion</keyword>
<keyword id="KW-0999">Mitochondrion inner membrane</keyword>
<keyword id="KW-0597">Phosphoprotein</keyword>
<keyword id="KW-1185">Reference proteome</keyword>
<keyword id="KW-0812">Transmembrane</keyword>
<keyword id="KW-1133">Transmembrane helix</keyword>
<reference key="1">
    <citation type="journal article" date="1997" name="J. Mol. Evol.">
        <title>Molecular evolution of cytochrome c oxidase subunit IV: evidence for positive selection in simian primates.</title>
        <authorList>
            <person name="Wu W."/>
            <person name="Goodman M."/>
            <person name="Lomax M.I."/>
            <person name="Grossman L.I."/>
        </authorList>
    </citation>
    <scope>NUCLEOTIDE SEQUENCE [GENOMIC DNA]</scope>
</reference>
<protein>
    <recommendedName>
        <fullName>Cytochrome c oxidase subunit 4 isoform 1, mitochondrial</fullName>
    </recommendedName>
    <alternativeName>
        <fullName>Cytochrome c oxidase polypeptide IV</fullName>
    </alternativeName>
    <alternativeName>
        <fullName>Cytochrome c oxidase subunit IV isoform 1</fullName>
        <shortName>COX IV-1</shortName>
    </alternativeName>
</protein>
<dbReference type="EMBL" id="AH005829">
    <property type="protein sequence ID" value="AAB97751.1"/>
    <property type="molecule type" value="Genomic_DNA"/>
</dbReference>
<dbReference type="SMR" id="O46577"/>
<dbReference type="STRING" id="9598.ENSPTRP00000014386"/>
<dbReference type="PaxDb" id="9598-ENSPTRP00000014386"/>
<dbReference type="eggNOG" id="KOG4075">
    <property type="taxonomic scope" value="Eukaryota"/>
</dbReference>
<dbReference type="InParanoid" id="O46577"/>
<dbReference type="UniPathway" id="UPA00705"/>
<dbReference type="Proteomes" id="UP000002277">
    <property type="component" value="Unplaced"/>
</dbReference>
<dbReference type="GO" id="GO:0005743">
    <property type="term" value="C:mitochondrial inner membrane"/>
    <property type="evidence" value="ECO:0000250"/>
    <property type="project" value="UniProtKB"/>
</dbReference>
<dbReference type="GO" id="GO:0045277">
    <property type="term" value="C:respiratory chain complex IV"/>
    <property type="evidence" value="ECO:0000318"/>
    <property type="project" value="GO_Central"/>
</dbReference>
<dbReference type="GO" id="GO:0006123">
    <property type="term" value="P:mitochondrial electron transport, cytochrome c to oxygen"/>
    <property type="evidence" value="ECO:0000318"/>
    <property type="project" value="GO_Central"/>
</dbReference>
<dbReference type="CDD" id="cd00922">
    <property type="entry name" value="Cyt_c_Oxidase_IV"/>
    <property type="match status" value="1"/>
</dbReference>
<dbReference type="FunFam" id="1.10.442.10:FF:000001">
    <property type="entry name" value="Cytochrome c oxidase subunit 4 isoform 1"/>
    <property type="match status" value="1"/>
</dbReference>
<dbReference type="Gene3D" id="1.10.442.10">
    <property type="entry name" value="Cytochrome c oxidase subunit IV"/>
    <property type="match status" value="1"/>
</dbReference>
<dbReference type="InterPro" id="IPR013288">
    <property type="entry name" value="Cyt_c_oxidase_su4"/>
</dbReference>
<dbReference type="InterPro" id="IPR004203">
    <property type="entry name" value="Cyt_c_oxidase_su4_fam"/>
</dbReference>
<dbReference type="InterPro" id="IPR036639">
    <property type="entry name" value="Cyt_c_oxidase_su4_sf"/>
</dbReference>
<dbReference type="PANTHER" id="PTHR10707:SF12">
    <property type="entry name" value="CYTOCHROME C OXIDASE SUBUNIT 4 ISOFORM 1, MITOCHONDRIAL"/>
    <property type="match status" value="1"/>
</dbReference>
<dbReference type="PANTHER" id="PTHR10707">
    <property type="entry name" value="CYTOCHROME C OXIDASE SUBUNIT IV"/>
    <property type="match status" value="1"/>
</dbReference>
<dbReference type="Pfam" id="PF02936">
    <property type="entry name" value="COX4"/>
    <property type="match status" value="1"/>
</dbReference>
<dbReference type="PRINTS" id="PR01873">
    <property type="entry name" value="CYTCOXIDASE4"/>
</dbReference>
<dbReference type="SUPFAM" id="SSF81406">
    <property type="entry name" value="Mitochondrial cytochrome c oxidase subunit IV"/>
    <property type="match status" value="1"/>
</dbReference>